<dbReference type="EC" id="2.7.7.75" evidence="17"/>
<dbReference type="EC" id="2.10.1.1" evidence="17"/>
<dbReference type="EMBL" id="X66366">
    <property type="protein sequence ID" value="CAA47009.2"/>
    <property type="molecule type" value="mRNA"/>
</dbReference>
<dbReference type="PIR" id="JH0681">
    <property type="entry name" value="JH0681"/>
</dbReference>
<dbReference type="RefSeq" id="NP_001421051.1">
    <molecule id="Q03555-3"/>
    <property type="nucleotide sequence ID" value="NM_001434122.1"/>
</dbReference>
<dbReference type="RefSeq" id="NP_001421056.1">
    <molecule id="Q03555-1"/>
    <property type="nucleotide sequence ID" value="NM_001434127.1"/>
</dbReference>
<dbReference type="RefSeq" id="NP_001421057.1">
    <molecule id="Q03555-4"/>
    <property type="nucleotide sequence ID" value="NM_001434128.1"/>
</dbReference>
<dbReference type="RefSeq" id="NP_074056.2">
    <molecule id="Q03555-6"/>
    <property type="nucleotide sequence ID" value="NM_022865.5"/>
</dbReference>
<dbReference type="PDB" id="1IHC">
    <property type="method" value="X-ray"/>
    <property type="resolution" value="1.90 A"/>
    <property type="chains" value="A=1-201"/>
</dbReference>
<dbReference type="PDB" id="1T3E">
    <property type="method" value="X-ray"/>
    <property type="resolution" value="3.25 A"/>
    <property type="chains" value="A/B=348-768"/>
</dbReference>
<dbReference type="PDB" id="2FTS">
    <property type="method" value="X-ray"/>
    <property type="resolution" value="2.41 A"/>
    <property type="chains" value="A=350-768"/>
</dbReference>
<dbReference type="PDB" id="2FU3">
    <property type="method" value="X-ray"/>
    <property type="resolution" value="2.70 A"/>
    <property type="chains" value="A/B=350-768"/>
</dbReference>
<dbReference type="PDB" id="4PD0">
    <property type="method" value="X-ray"/>
    <property type="resolution" value="1.70 A"/>
    <property type="chains" value="A=350-768"/>
</dbReference>
<dbReference type="PDB" id="4PD1">
    <property type="method" value="X-ray"/>
    <property type="resolution" value="1.98 A"/>
    <property type="chains" value="A=350-768"/>
</dbReference>
<dbReference type="PDB" id="4TK1">
    <property type="method" value="X-ray"/>
    <property type="resolution" value="2.70 A"/>
    <property type="chains" value="A/B=350-768"/>
</dbReference>
<dbReference type="PDB" id="4TK2">
    <property type="method" value="X-ray"/>
    <property type="resolution" value="4.10 A"/>
    <property type="chains" value="A/B=350-768"/>
</dbReference>
<dbReference type="PDB" id="4TK3">
    <property type="method" value="X-ray"/>
    <property type="resolution" value="2.70 A"/>
    <property type="chains" value="A/B=350-768"/>
</dbReference>
<dbReference type="PDB" id="4TK4">
    <property type="method" value="X-ray"/>
    <property type="resolution" value="3.60 A"/>
    <property type="chains" value="A/B=350-768"/>
</dbReference>
<dbReference type="PDB" id="4U90">
    <property type="method" value="X-ray"/>
    <property type="resolution" value="2.00 A"/>
    <property type="chains" value="A=350-768"/>
</dbReference>
<dbReference type="PDB" id="4U91">
    <property type="method" value="X-ray"/>
    <property type="resolution" value="2.00 A"/>
    <property type="chains" value="A=350-768"/>
</dbReference>
<dbReference type="PDB" id="5ERQ">
    <property type="method" value="X-ray"/>
    <property type="resolution" value="1.55 A"/>
    <property type="chains" value="A=350-768"/>
</dbReference>
<dbReference type="PDB" id="5ERR">
    <property type="method" value="X-ray"/>
    <property type="resolution" value="1.65 A"/>
    <property type="chains" value="A=350-768"/>
</dbReference>
<dbReference type="PDB" id="5ERS">
    <property type="method" value="X-ray"/>
    <property type="resolution" value="1.70 A"/>
    <property type="chains" value="A=350-768"/>
</dbReference>
<dbReference type="PDB" id="5ERT">
    <property type="method" value="X-ray"/>
    <property type="resolution" value="2.00 A"/>
    <property type="chains" value="A=350-768"/>
</dbReference>
<dbReference type="PDB" id="5ERU">
    <property type="method" value="X-ray"/>
    <property type="resolution" value="1.60 A"/>
    <property type="chains" value="A=350-768"/>
</dbReference>
<dbReference type="PDB" id="5ERV">
    <property type="method" value="X-ray"/>
    <property type="resolution" value="1.80 A"/>
    <property type="chains" value="A=350-768"/>
</dbReference>
<dbReference type="PDB" id="6FGC">
    <property type="method" value="X-ray"/>
    <property type="resolution" value="1.50 A"/>
    <property type="chains" value="A=350-768"/>
</dbReference>
<dbReference type="PDB" id="6FGD">
    <property type="method" value="X-ray"/>
    <property type="resolution" value="1.50 A"/>
    <property type="chains" value="A=350-768"/>
</dbReference>
<dbReference type="PDB" id="6HSN">
    <property type="method" value="X-ray"/>
    <property type="resolution" value="1.55 A"/>
    <property type="chains" value="A=350-768"/>
</dbReference>
<dbReference type="PDB" id="6HSO">
    <property type="method" value="X-ray"/>
    <property type="resolution" value="1.95 A"/>
    <property type="chains" value="A=350-768"/>
</dbReference>
<dbReference type="PDBsum" id="1IHC"/>
<dbReference type="PDBsum" id="1T3E"/>
<dbReference type="PDBsum" id="2FTS"/>
<dbReference type="PDBsum" id="2FU3"/>
<dbReference type="PDBsum" id="4PD0"/>
<dbReference type="PDBsum" id="4PD1"/>
<dbReference type="PDBsum" id="4TK1"/>
<dbReference type="PDBsum" id="4TK2"/>
<dbReference type="PDBsum" id="4TK3"/>
<dbReference type="PDBsum" id="4TK4"/>
<dbReference type="PDBsum" id="4U90"/>
<dbReference type="PDBsum" id="4U91"/>
<dbReference type="PDBsum" id="5ERQ"/>
<dbReference type="PDBsum" id="5ERR"/>
<dbReference type="PDBsum" id="5ERS"/>
<dbReference type="PDBsum" id="5ERT"/>
<dbReference type="PDBsum" id="5ERU"/>
<dbReference type="PDBsum" id="5ERV"/>
<dbReference type="PDBsum" id="6FGC"/>
<dbReference type="PDBsum" id="6FGD"/>
<dbReference type="PDBsum" id="6HSN"/>
<dbReference type="PDBsum" id="6HSO"/>
<dbReference type="SMR" id="Q03555"/>
<dbReference type="BioGRID" id="249211">
    <property type="interactions" value="10"/>
</dbReference>
<dbReference type="DIP" id="DIP-33263N"/>
<dbReference type="FunCoup" id="Q03555">
    <property type="interactions" value="2083"/>
</dbReference>
<dbReference type="IntAct" id="Q03555">
    <property type="interactions" value="9"/>
</dbReference>
<dbReference type="MINT" id="Q03555"/>
<dbReference type="STRING" id="10116.ENSRNOP00000064099"/>
<dbReference type="iPTMnet" id="Q03555"/>
<dbReference type="PhosphoSitePlus" id="Q03555"/>
<dbReference type="SwissPalm" id="Q03555"/>
<dbReference type="jPOST" id="Q03555"/>
<dbReference type="PaxDb" id="10116-ENSRNOP00000064099"/>
<dbReference type="ABCD" id="Q03555">
    <property type="antibodies" value="3 sequenced antibodies"/>
</dbReference>
<dbReference type="Ensembl" id="ENSRNOT00000100642.1">
    <molecule id="Q03555-1"/>
    <property type="protein sequence ID" value="ENSRNOP00000091082.1"/>
    <property type="gene ID" value="ENSRNOG00000064046.1"/>
</dbReference>
<dbReference type="Ensembl" id="ENSRNOT00000101616.1">
    <molecule id="Q03555-3"/>
    <property type="protein sequence ID" value="ENSRNOP00000083857.1"/>
    <property type="gene ID" value="ENSRNOG00000064630.1"/>
</dbReference>
<dbReference type="Ensembl" id="ENSRNOT00000104959.1">
    <molecule id="Q03555-5"/>
    <property type="protein sequence ID" value="ENSRNOP00000097129.1"/>
    <property type="gene ID" value="ENSRNOG00000064630.1"/>
</dbReference>
<dbReference type="Ensembl" id="ENSRNOT00000106781.1">
    <molecule id="Q03555-5"/>
    <property type="protein sequence ID" value="ENSRNOP00000082928.1"/>
    <property type="gene ID" value="ENSRNOG00000064046.1"/>
</dbReference>
<dbReference type="Ensembl" id="ENSRNOT00000107245.1">
    <molecule id="Q03555-1"/>
    <property type="protein sequence ID" value="ENSRNOP00000082164.1"/>
    <property type="gene ID" value="ENSRNOG00000064630.1"/>
</dbReference>
<dbReference type="Ensembl" id="ENSRNOT00000108357.1">
    <molecule id="Q03555-3"/>
    <property type="protein sequence ID" value="ENSRNOP00000093484.1"/>
    <property type="gene ID" value="ENSRNOG00000064046.1"/>
</dbReference>
<dbReference type="GeneID" id="64845"/>
<dbReference type="KEGG" id="rno:64845"/>
<dbReference type="UCSC" id="RGD:69194">
    <molecule id="Q03555-1"/>
    <property type="organism name" value="rat"/>
</dbReference>
<dbReference type="AGR" id="RGD:69194"/>
<dbReference type="CTD" id="10243"/>
<dbReference type="RGD" id="69194">
    <property type="gene designation" value="Gphn"/>
</dbReference>
<dbReference type="eggNOG" id="KOG2371">
    <property type="taxonomic scope" value="Eukaryota"/>
</dbReference>
<dbReference type="GeneTree" id="ENSGT00390000016577"/>
<dbReference type="InParanoid" id="Q03555"/>
<dbReference type="PhylomeDB" id="Q03555"/>
<dbReference type="Reactome" id="R-RNO-947581">
    <property type="pathway name" value="Molybdenum cofactor biosynthesis"/>
</dbReference>
<dbReference type="UniPathway" id="UPA00344"/>
<dbReference type="CD-CODE" id="A7E9CBB4">
    <property type="entry name" value="Postsynaptic density"/>
</dbReference>
<dbReference type="EvolutionaryTrace" id="Q03555"/>
<dbReference type="PRO" id="PR:Q03555"/>
<dbReference type="Proteomes" id="UP000002494">
    <property type="component" value="Chromosome 6"/>
</dbReference>
<dbReference type="GO" id="GO:0005737">
    <property type="term" value="C:cytoplasm"/>
    <property type="evidence" value="ECO:0000314"/>
    <property type="project" value="UniProtKB"/>
</dbReference>
<dbReference type="GO" id="GO:0009898">
    <property type="term" value="C:cytoplasmic side of plasma membrane"/>
    <property type="evidence" value="ECO:0000314"/>
    <property type="project" value="UniProtKB"/>
</dbReference>
<dbReference type="GO" id="GO:0005856">
    <property type="term" value="C:cytoskeleton"/>
    <property type="evidence" value="ECO:0007669"/>
    <property type="project" value="UniProtKB-SubCell"/>
</dbReference>
<dbReference type="GO" id="GO:0005829">
    <property type="term" value="C:cytosol"/>
    <property type="evidence" value="ECO:0000250"/>
    <property type="project" value="UniProtKB"/>
</dbReference>
<dbReference type="GO" id="GO:0030425">
    <property type="term" value="C:dendrite"/>
    <property type="evidence" value="ECO:0000250"/>
    <property type="project" value="UniProtKB"/>
</dbReference>
<dbReference type="GO" id="GO:0043197">
    <property type="term" value="C:dendritic spine"/>
    <property type="evidence" value="ECO:0000266"/>
    <property type="project" value="RGD"/>
</dbReference>
<dbReference type="GO" id="GO:0098982">
    <property type="term" value="C:GABA-ergic synapse"/>
    <property type="evidence" value="ECO:0000314"/>
    <property type="project" value="RGD"/>
</dbReference>
<dbReference type="GO" id="GO:0098690">
    <property type="term" value="C:glycinergic synapse"/>
    <property type="evidence" value="ECO:0000314"/>
    <property type="project" value="SynGO"/>
</dbReference>
<dbReference type="GO" id="GO:0060077">
    <property type="term" value="C:inhibitory synapse"/>
    <property type="evidence" value="ECO:0000314"/>
    <property type="project" value="BHF-UCL"/>
</dbReference>
<dbReference type="GO" id="GO:0043025">
    <property type="term" value="C:neuronal cell body"/>
    <property type="evidence" value="ECO:0000266"/>
    <property type="project" value="RGD"/>
</dbReference>
<dbReference type="GO" id="GO:0098794">
    <property type="term" value="C:postsynapse"/>
    <property type="evidence" value="ECO:0000314"/>
    <property type="project" value="RGD"/>
</dbReference>
<dbReference type="GO" id="GO:0014069">
    <property type="term" value="C:postsynaptic density"/>
    <property type="evidence" value="ECO:0000250"/>
    <property type="project" value="UniProtKB"/>
</dbReference>
<dbReference type="GO" id="GO:0045211">
    <property type="term" value="C:postsynaptic membrane"/>
    <property type="evidence" value="ECO:0000250"/>
    <property type="project" value="UniProtKB"/>
</dbReference>
<dbReference type="GO" id="GO:0099572">
    <property type="term" value="C:postsynaptic specialization"/>
    <property type="evidence" value="ECO:0000318"/>
    <property type="project" value="GO_Central"/>
</dbReference>
<dbReference type="GO" id="GO:0099091">
    <property type="term" value="C:postsynaptic specialization, intracellular component"/>
    <property type="evidence" value="ECO:0000314"/>
    <property type="project" value="SynGO"/>
</dbReference>
<dbReference type="GO" id="GO:0097060">
    <property type="term" value="C:synaptic membrane"/>
    <property type="evidence" value="ECO:0000250"/>
    <property type="project" value="UniProtKB"/>
</dbReference>
<dbReference type="GO" id="GO:0005524">
    <property type="term" value="F:ATP binding"/>
    <property type="evidence" value="ECO:0007669"/>
    <property type="project" value="UniProtKB-KW"/>
</dbReference>
<dbReference type="GO" id="GO:0042802">
    <property type="term" value="F:identical protein binding"/>
    <property type="evidence" value="ECO:0000353"/>
    <property type="project" value="RGD"/>
</dbReference>
<dbReference type="GO" id="GO:0046872">
    <property type="term" value="F:metal ion binding"/>
    <property type="evidence" value="ECO:0007669"/>
    <property type="project" value="UniProtKB-KW"/>
</dbReference>
<dbReference type="GO" id="GO:0060090">
    <property type="term" value="F:molecular adaptor activity"/>
    <property type="evidence" value="ECO:0000314"/>
    <property type="project" value="RGD"/>
</dbReference>
<dbReference type="GO" id="GO:0061598">
    <property type="term" value="F:molybdopterin adenylyltransferase activity"/>
    <property type="evidence" value="ECO:0000314"/>
    <property type="project" value="MGI"/>
</dbReference>
<dbReference type="GO" id="GO:0043546">
    <property type="term" value="F:molybdopterin cofactor binding"/>
    <property type="evidence" value="ECO:0000266"/>
    <property type="project" value="RGD"/>
</dbReference>
<dbReference type="GO" id="GO:0061599">
    <property type="term" value="F:molybdopterin molybdotransferase activity"/>
    <property type="evidence" value="ECO:0000314"/>
    <property type="project" value="MGI"/>
</dbReference>
<dbReference type="GO" id="GO:0008940">
    <property type="term" value="F:nitrate reductase activity"/>
    <property type="evidence" value="ECO:0000266"/>
    <property type="project" value="RGD"/>
</dbReference>
<dbReference type="GO" id="GO:0030674">
    <property type="term" value="F:protein-macromolecule adaptor activity"/>
    <property type="evidence" value="ECO:0000266"/>
    <property type="project" value="RGD"/>
</dbReference>
<dbReference type="GO" id="GO:0005102">
    <property type="term" value="F:signaling receptor binding"/>
    <property type="evidence" value="ECO:0000353"/>
    <property type="project" value="RGD"/>
</dbReference>
<dbReference type="GO" id="GO:0015631">
    <property type="term" value="F:tubulin binding"/>
    <property type="evidence" value="ECO:0000304"/>
    <property type="project" value="RGD"/>
</dbReference>
<dbReference type="GO" id="GO:0045184">
    <property type="term" value="P:establishment of protein localization"/>
    <property type="evidence" value="ECO:0000315"/>
    <property type="project" value="BHF-UCL"/>
</dbReference>
<dbReference type="GO" id="GO:0007529">
    <property type="term" value="P:establishment of synaptic specificity at neuromuscular junction"/>
    <property type="evidence" value="ECO:0000266"/>
    <property type="project" value="RGD"/>
</dbReference>
<dbReference type="GO" id="GO:0097112">
    <property type="term" value="P:gamma-aminobutyric acid receptor clustering"/>
    <property type="evidence" value="ECO:0000250"/>
    <property type="project" value="UniProtKB"/>
</dbReference>
<dbReference type="GO" id="GO:0072579">
    <property type="term" value="P:glycine receptor clustering"/>
    <property type="evidence" value="ECO:0000266"/>
    <property type="project" value="RGD"/>
</dbReference>
<dbReference type="GO" id="GO:0006777">
    <property type="term" value="P:Mo-molybdopterin cofactor biosynthetic process"/>
    <property type="evidence" value="ECO:0000314"/>
    <property type="project" value="MGI"/>
</dbReference>
<dbReference type="GO" id="GO:0032324">
    <property type="term" value="P:molybdopterin cofactor biosynthetic process"/>
    <property type="evidence" value="ECO:0000266"/>
    <property type="project" value="RGD"/>
</dbReference>
<dbReference type="GO" id="GO:0099645">
    <property type="term" value="P:neurotransmitter receptor localization to postsynaptic specialization membrane"/>
    <property type="evidence" value="ECO:0000314"/>
    <property type="project" value="SynGO"/>
</dbReference>
<dbReference type="GO" id="GO:0006605">
    <property type="term" value="P:protein targeting"/>
    <property type="evidence" value="ECO:0000304"/>
    <property type="project" value="RGD"/>
</dbReference>
<dbReference type="GO" id="GO:0010038">
    <property type="term" value="P:response to metal ion"/>
    <property type="evidence" value="ECO:0000266"/>
    <property type="project" value="RGD"/>
</dbReference>
<dbReference type="GO" id="GO:0007416">
    <property type="term" value="P:synapse assembly"/>
    <property type="evidence" value="ECO:0000270"/>
    <property type="project" value="RGD"/>
</dbReference>
<dbReference type="CDD" id="cd00887">
    <property type="entry name" value="MoeA"/>
    <property type="match status" value="1"/>
</dbReference>
<dbReference type="CDD" id="cd00886">
    <property type="entry name" value="MogA_MoaB"/>
    <property type="match status" value="1"/>
</dbReference>
<dbReference type="FunFam" id="2.170.190.11:FF:000001">
    <property type="entry name" value="Molybdopterin molybdenumtransferase"/>
    <property type="match status" value="1"/>
</dbReference>
<dbReference type="FunFam" id="2.40.340.10:FF:000001">
    <property type="entry name" value="Molybdopterin molybdenumtransferase"/>
    <property type="match status" value="1"/>
</dbReference>
<dbReference type="FunFam" id="3.40.980.10:FF:000001">
    <property type="entry name" value="Molybdopterin molybdenumtransferase"/>
    <property type="match status" value="1"/>
</dbReference>
<dbReference type="FunFam" id="3.40.980.10:FF:000002">
    <property type="entry name" value="Molybdopterin molybdenumtransferase"/>
    <property type="match status" value="1"/>
</dbReference>
<dbReference type="FunFam" id="3.90.105.10:FF:000004">
    <property type="entry name" value="Molybdopterin molybdenumtransferase"/>
    <property type="match status" value="1"/>
</dbReference>
<dbReference type="Gene3D" id="3.40.980.10">
    <property type="entry name" value="MoaB/Mog-like domain"/>
    <property type="match status" value="2"/>
</dbReference>
<dbReference type="Gene3D" id="2.40.340.10">
    <property type="entry name" value="MoeA, C-terminal, domain IV"/>
    <property type="match status" value="1"/>
</dbReference>
<dbReference type="Gene3D" id="3.90.105.10">
    <property type="entry name" value="Molybdopterin biosynthesis moea protein, domain 2"/>
    <property type="match status" value="1"/>
</dbReference>
<dbReference type="Gene3D" id="2.170.190.11">
    <property type="entry name" value="Molybdopterin biosynthesis moea protein, domain 3"/>
    <property type="match status" value="1"/>
</dbReference>
<dbReference type="InterPro" id="IPR036425">
    <property type="entry name" value="MoaB/Mog-like_dom_sf"/>
</dbReference>
<dbReference type="InterPro" id="IPR001453">
    <property type="entry name" value="MoaB/Mog_dom"/>
</dbReference>
<dbReference type="InterPro" id="IPR008284">
    <property type="entry name" value="MoCF_biosynth_CS"/>
</dbReference>
<dbReference type="InterPro" id="IPR038987">
    <property type="entry name" value="MoeA-like"/>
</dbReference>
<dbReference type="InterPro" id="IPR005111">
    <property type="entry name" value="MoeA_C_domain_IV"/>
</dbReference>
<dbReference type="InterPro" id="IPR036688">
    <property type="entry name" value="MoeA_C_domain_IV_sf"/>
</dbReference>
<dbReference type="InterPro" id="IPR005110">
    <property type="entry name" value="MoeA_linker/N"/>
</dbReference>
<dbReference type="InterPro" id="IPR036135">
    <property type="entry name" value="MoeA_linker/N_sf"/>
</dbReference>
<dbReference type="NCBIfam" id="NF045515">
    <property type="entry name" value="Glp_gephyrin"/>
    <property type="match status" value="1"/>
</dbReference>
<dbReference type="NCBIfam" id="TIGR00177">
    <property type="entry name" value="molyb_syn"/>
    <property type="match status" value="2"/>
</dbReference>
<dbReference type="PANTHER" id="PTHR10192:SF5">
    <property type="entry name" value="GEPHYRIN"/>
    <property type="match status" value="1"/>
</dbReference>
<dbReference type="PANTHER" id="PTHR10192">
    <property type="entry name" value="MOLYBDOPTERIN BIOSYNTHESIS PROTEIN"/>
    <property type="match status" value="1"/>
</dbReference>
<dbReference type="Pfam" id="PF00994">
    <property type="entry name" value="MoCF_biosynth"/>
    <property type="match status" value="2"/>
</dbReference>
<dbReference type="Pfam" id="PF03454">
    <property type="entry name" value="MoeA_C"/>
    <property type="match status" value="1"/>
</dbReference>
<dbReference type="Pfam" id="PF03453">
    <property type="entry name" value="MoeA_N"/>
    <property type="match status" value="1"/>
</dbReference>
<dbReference type="SMART" id="SM00852">
    <property type="entry name" value="MoCF_biosynth"/>
    <property type="match status" value="2"/>
</dbReference>
<dbReference type="SUPFAM" id="SSF63867">
    <property type="entry name" value="MoeA C-terminal domain-like"/>
    <property type="match status" value="1"/>
</dbReference>
<dbReference type="SUPFAM" id="SSF63882">
    <property type="entry name" value="MoeA N-terminal region -like"/>
    <property type="match status" value="1"/>
</dbReference>
<dbReference type="SUPFAM" id="SSF53218">
    <property type="entry name" value="Molybdenum cofactor biosynthesis proteins"/>
    <property type="match status" value="2"/>
</dbReference>
<dbReference type="PROSITE" id="PS01078">
    <property type="entry name" value="MOCF_BIOSYNTHESIS_1"/>
    <property type="match status" value="1"/>
</dbReference>
<dbReference type="PROSITE" id="PS01079">
    <property type="entry name" value="MOCF_BIOSYNTHESIS_2"/>
    <property type="match status" value="1"/>
</dbReference>
<gene>
    <name type="primary">Gphn</name>
    <name type="synonym">Gph</name>
</gene>
<proteinExistence type="evidence at protein level"/>
<feature type="chain" id="PRO_0000170965" description="Gephyrin">
    <location>
        <begin position="1"/>
        <end position="768"/>
    </location>
</feature>
<feature type="region of interest" description="MPT Mo-transferase">
    <location>
        <begin position="14"/>
        <end position="166"/>
    </location>
</feature>
<feature type="region of interest" description="Interaction with GABARAP" evidence="5">
    <location>
        <begin position="153"/>
        <end position="348"/>
    </location>
</feature>
<feature type="region of interest" description="Disordered" evidence="4">
    <location>
        <begin position="194"/>
        <end position="245"/>
    </location>
</feature>
<feature type="region of interest" description="Disordered" evidence="4">
    <location>
        <begin position="273"/>
        <end position="316"/>
    </location>
</feature>
<feature type="region of interest" description="MPT adenylyltransferase">
    <location>
        <begin position="326"/>
        <end position="768"/>
    </location>
</feature>
<feature type="compositionally biased region" description="Pro residues" evidence="4">
    <location>
        <begin position="200"/>
        <end position="212"/>
    </location>
</feature>
<feature type="compositionally biased region" description="Polar residues" evidence="4">
    <location>
        <begin position="274"/>
        <end position="299"/>
    </location>
</feature>
<feature type="modified residue" description="Phosphoserine" evidence="18">
    <location>
        <position position="201"/>
    </location>
</feature>
<feature type="modified residue" description="Phosphoserine" evidence="18">
    <location>
        <position position="207"/>
    </location>
</feature>
<feature type="modified residue" description="Phosphothreonine" evidence="3">
    <location>
        <position position="211"/>
    </location>
</feature>
<feature type="modified residue" description="Phosphoserine" evidence="2">
    <location>
        <position position="213"/>
    </location>
</feature>
<feature type="modified residue" description="Phosphoserine" evidence="2">
    <location>
        <position position="275"/>
    </location>
</feature>
<feature type="modified residue" description="Phosphothreonine" evidence="2">
    <location>
        <position position="278"/>
    </location>
</feature>
<feature type="modified residue" description="Phosphothreonine" evidence="3">
    <location>
        <position position="279"/>
    </location>
</feature>
<feature type="modified residue" description="Phosphoserine" evidence="2">
    <location>
        <position position="281"/>
    </location>
</feature>
<feature type="modified residue" description="Phosphoserine" evidence="18">
    <location>
        <position position="283"/>
    </location>
</feature>
<feature type="modified residue" description="Phosphoserine" evidence="3">
    <location>
        <position position="337"/>
    </location>
</feature>
<feature type="lipid moiety-binding region" description="S-palmitoyl cysteine" evidence="3">
    <location>
        <position position="225"/>
    </location>
</feature>
<feature type="lipid moiety-binding region" description="S-palmitoyl cysteine" evidence="3">
    <location>
        <position position="297"/>
    </location>
</feature>
<feature type="splice variant" id="VSP_003238" description="In isoform 1." evidence="12">
    <original>MATEGMILTNHDHQIRVGVLTV</original>
    <variation>MSFPLSPAFTLLHILV</variation>
    <location>
        <begin position="1"/>
        <end position="22"/>
    </location>
</feature>
<feature type="splice variant" id="VSP_003239" description="In isoform 5, isoform 2 and isoform 3." evidence="12 13">
    <location>
        <begin position="99"/>
        <end position="111"/>
    </location>
</feature>
<feature type="splice variant" id="VSP_003240" description="In isoform 2." evidence="12">
    <original>K</original>
    <variation>KNHPFYTSPAVFMANHGQPIPGLISYSHHATGSADKR</variation>
    <location>
        <position position="256"/>
    </location>
</feature>
<feature type="splice variant" id="VSP_003243" description="In isoform 5 and isoform 2." evidence="12 13">
    <location>
        <begin position="302"/>
        <end position="320"/>
    </location>
</feature>
<feature type="splice variant" id="VSP_003241" description="In isoform 4." evidence="12">
    <original>QIRRPDESKGVASR</original>
    <variation>ARLPSCSSTYSVSE</variation>
    <location>
        <begin position="302"/>
        <end position="315"/>
    </location>
</feature>
<feature type="splice variant" id="VSP_003242" description="In isoform 4." evidence="12">
    <location>
        <begin position="316"/>
        <end position="320"/>
    </location>
</feature>
<feature type="mutagenesis site" description="Reduced GLRB binding." evidence="9">
    <original>F</original>
    <variation>A</variation>
    <location>
        <position position="362"/>
    </location>
</feature>
<feature type="mutagenesis site" description="Reduced GLRB binding." evidence="9">
    <original>PP</original>
    <variation>AA</variation>
    <location>
        <begin position="745"/>
        <end position="746"/>
    </location>
</feature>
<feature type="mutagenesis site" description="Loss of GLRB binding." evidence="9">
    <original>P</original>
    <variation>A</variation>
    <location>
        <position position="745"/>
    </location>
</feature>
<feature type="sequence conflict" description="In Ref. 3." evidence="14" ref="3">
    <original>A</original>
    <variation>R</variation>
    <location>
        <position position="255"/>
    </location>
</feature>
<feature type="strand" evidence="19">
    <location>
        <begin position="16"/>
        <end position="22"/>
    </location>
</feature>
<feature type="helix" evidence="19">
    <location>
        <begin position="24"/>
        <end position="27"/>
    </location>
</feature>
<feature type="helix" evidence="19">
    <location>
        <begin position="34"/>
        <end position="44"/>
    </location>
</feature>
<feature type="turn" evidence="19">
    <location>
        <begin position="46"/>
        <end position="49"/>
    </location>
</feature>
<feature type="strand" evidence="19">
    <location>
        <begin position="52"/>
        <end position="59"/>
    </location>
</feature>
<feature type="helix" evidence="19">
    <location>
        <begin position="63"/>
        <end position="75"/>
    </location>
</feature>
<feature type="strand" evidence="19">
    <location>
        <begin position="80"/>
        <end position="86"/>
    </location>
</feature>
<feature type="strand" evidence="19">
    <location>
        <begin position="89"/>
        <end position="91"/>
    </location>
</feature>
<feature type="helix" evidence="19">
    <location>
        <begin position="112"/>
        <end position="116"/>
    </location>
</feature>
<feature type="strand" evidence="19">
    <location>
        <begin position="118"/>
        <end position="120"/>
    </location>
</feature>
<feature type="helix" evidence="19">
    <location>
        <begin position="122"/>
        <end position="135"/>
    </location>
</feature>
<feature type="helix" evidence="19">
    <location>
        <begin position="137"/>
        <end position="141"/>
    </location>
</feature>
<feature type="strand" evidence="19">
    <location>
        <begin position="146"/>
        <end position="149"/>
    </location>
</feature>
<feature type="strand" evidence="19">
    <location>
        <begin position="152"/>
        <end position="157"/>
    </location>
</feature>
<feature type="helix" evidence="19">
    <location>
        <begin position="161"/>
        <end position="171"/>
    </location>
</feature>
<feature type="helix" evidence="19">
    <location>
        <begin position="172"/>
        <end position="174"/>
    </location>
</feature>
<feature type="helix" evidence="19">
    <location>
        <begin position="175"/>
        <end position="182"/>
    </location>
</feature>
<feature type="helix" evidence="19">
    <location>
        <begin position="188"/>
        <end position="193"/>
    </location>
</feature>
<feature type="strand" evidence="24">
    <location>
        <begin position="355"/>
        <end position="357"/>
    </location>
</feature>
<feature type="helix" evidence="23">
    <location>
        <begin position="358"/>
        <end position="368"/>
    </location>
</feature>
<feature type="strand" evidence="23">
    <location>
        <begin position="374"/>
        <end position="378"/>
    </location>
</feature>
<feature type="helix" evidence="23">
    <location>
        <begin position="379"/>
        <end position="381"/>
    </location>
</feature>
<feature type="strand" evidence="23">
    <location>
        <begin position="386"/>
        <end position="389"/>
    </location>
</feature>
<feature type="strand" evidence="23">
    <location>
        <begin position="397"/>
        <end position="400"/>
    </location>
</feature>
<feature type="strand" evidence="23">
    <location>
        <begin position="402"/>
        <end position="410"/>
    </location>
</feature>
<feature type="helix" evidence="23">
    <location>
        <begin position="412"/>
        <end position="414"/>
    </location>
</feature>
<feature type="strand" evidence="23">
    <location>
        <begin position="416"/>
        <end position="425"/>
    </location>
</feature>
<feature type="strand" evidence="23">
    <location>
        <begin position="439"/>
        <end position="443"/>
    </location>
</feature>
<feature type="strand" evidence="23">
    <location>
        <begin position="455"/>
        <end position="458"/>
    </location>
</feature>
<feature type="helix" evidence="23">
    <location>
        <begin position="459"/>
        <end position="461"/>
    </location>
</feature>
<feature type="strand" evidence="23">
    <location>
        <begin position="462"/>
        <end position="467"/>
    </location>
</feature>
<feature type="strand" evidence="23">
    <location>
        <begin position="471"/>
        <end position="479"/>
    </location>
</feature>
<feature type="turn" evidence="23">
    <location>
        <begin position="485"/>
        <end position="488"/>
    </location>
</feature>
<feature type="strand" evidence="23">
    <location>
        <begin position="494"/>
        <end position="496"/>
    </location>
</feature>
<feature type="strand" evidence="23">
    <location>
        <begin position="501"/>
        <end position="503"/>
    </location>
</feature>
<feature type="helix" evidence="23">
    <location>
        <begin position="511"/>
        <end position="520"/>
    </location>
</feature>
<feature type="strand" evidence="23">
    <location>
        <begin position="524"/>
        <end position="528"/>
    </location>
</feature>
<feature type="strand" evidence="23">
    <location>
        <begin position="533"/>
        <end position="538"/>
    </location>
</feature>
<feature type="helix" evidence="23">
    <location>
        <begin position="558"/>
        <end position="568"/>
    </location>
</feature>
<feature type="strand" evidence="23">
    <location>
        <begin position="573"/>
        <end position="579"/>
    </location>
</feature>
<feature type="helix" evidence="23">
    <location>
        <begin position="583"/>
        <end position="596"/>
    </location>
</feature>
<feature type="strand" evidence="23">
    <location>
        <begin position="598"/>
        <end position="604"/>
    </location>
</feature>
<feature type="strand" evidence="22">
    <location>
        <begin position="607"/>
        <end position="609"/>
    </location>
</feature>
<feature type="turn" evidence="22">
    <location>
        <begin position="610"/>
        <end position="613"/>
    </location>
</feature>
<feature type="helix" evidence="23">
    <location>
        <begin position="614"/>
        <end position="620"/>
    </location>
</feature>
<feature type="strand" evidence="23">
    <location>
        <begin position="625"/>
        <end position="632"/>
    </location>
</feature>
<feature type="strand" evidence="23">
    <location>
        <begin position="640"/>
        <end position="646"/>
    </location>
</feature>
<feature type="strand" evidence="23">
    <location>
        <begin position="649"/>
        <end position="656"/>
    </location>
</feature>
<feature type="helix" evidence="23">
    <location>
        <begin position="660"/>
        <end position="678"/>
    </location>
</feature>
<feature type="strand" evidence="23">
    <location>
        <begin position="688"/>
        <end position="695"/>
    </location>
</feature>
<feature type="strand" evidence="23">
    <location>
        <begin position="704"/>
        <end position="711"/>
    </location>
</feature>
<feature type="strand" evidence="20">
    <location>
        <begin position="716"/>
        <end position="718"/>
    </location>
</feature>
<feature type="strand" evidence="23">
    <location>
        <begin position="720"/>
        <end position="723"/>
    </location>
</feature>
<feature type="strand" evidence="21">
    <location>
        <begin position="728"/>
        <end position="730"/>
    </location>
</feature>
<feature type="helix" evidence="23">
    <location>
        <begin position="733"/>
        <end position="735"/>
    </location>
</feature>
<feature type="strand" evidence="23">
    <location>
        <begin position="740"/>
        <end position="744"/>
    </location>
</feature>
<feature type="strand" evidence="24">
    <location>
        <begin position="752"/>
        <end position="754"/>
    </location>
</feature>
<feature type="strand" evidence="23">
    <location>
        <begin position="759"/>
        <end position="764"/>
    </location>
</feature>
<sequence length="768" mass="83266">MATEGMILTNHDHQIRVGVLTVSDSCFRNLAEDRSGINLKDLVQDPSLLGGTISAYKIVPDEIEEIKETLIDWCDEKELNLILTTGGTGFAPRDVTPEKFPTFPFCGLQKGATKEVIEREAPGMALAMLMGSLNVTPLGMLSRPVCGIRGKTLIINLPGSKKGSQECFQFILPALPHAIDLLRDAIVKVKEVHDELEDLPSPPPPLSPPPTTSPHKQTEDKGVQCEEEEEEKKDSGVASTEDSSSSHITAAALAAKIPDSIISRGVQVLPRDTASLSTTPSESPRAQATSRLSTASCPTPKQIRRPDESKGVASRVGSLKVQSRCSSKENILRASHSAVDITKVARRHRMSPFPLTSMDKAFITVLEMTPVLGTEIINYRDGMGRVLAQDVYAKDNLPPFPASVKDGYAVRAADGPGDRFIIGESQAGEQPTQTVMPGQVMRVTTGAPIPCGADAVVQVEDTELIRESDDGTEELEVRILVQARPGQDIRPIGHDIKRGECVLAKGTHMGPSEIGLLATVGVTEVEVNKFPVVAVMSTGNELLNPEDDLLPGKIRDSNRSTLLATIQEHGYPTINLGIVGDNPDDLLNALNEGISRADVIITSGGVSMGEKDYLKQVLDIDLHAQIHFGRVFMKPGLPTTFATLDIDGVRKIIFALPGNPVSAVVTCNLFVVPALRKMQGILDPRPTIIKARLSCDVKLDPRPEYHRCILTWHHQEPLPWAQSTGNQMSSRLMSMRSANGLLMLPPKTEQYVELHKGEVVDVMVIGRL</sequence>
<organism>
    <name type="scientific">Rattus norvegicus</name>
    <name type="common">Rat</name>
    <dbReference type="NCBI Taxonomy" id="10116"/>
    <lineage>
        <taxon>Eukaryota</taxon>
        <taxon>Metazoa</taxon>
        <taxon>Chordata</taxon>
        <taxon>Craniata</taxon>
        <taxon>Vertebrata</taxon>
        <taxon>Euteleostomi</taxon>
        <taxon>Mammalia</taxon>
        <taxon>Eutheria</taxon>
        <taxon>Euarchontoglires</taxon>
        <taxon>Glires</taxon>
        <taxon>Rodentia</taxon>
        <taxon>Myomorpha</taxon>
        <taxon>Muroidea</taxon>
        <taxon>Muridae</taxon>
        <taxon>Murinae</taxon>
        <taxon>Rattus</taxon>
    </lineage>
</organism>
<comment type="function">
    <text evidence="2 10">Microtubule-associated protein involved in membrane protein-cytoskeleton interactions. It is thought to anchor the inhibitory glycine receptor (GLYR) to subsynaptic microtubules (PubMed:8264797). Acts as a major instructive molecule at inhibitory synapses, where it also clusters GABA type A receptors (By similarity).</text>
</comment>
<comment type="function">
    <text evidence="11">Also has a catalytic activity and catalyzes two steps in the biosynthesis of the molybdenum cofactor. In the first step, molybdopterin is adenylated. Subsequently, molybdate is inserted into adenylated molybdopterin and AMP is released.</text>
</comment>
<comment type="catalytic activity">
    <reaction evidence="17">
        <text>molybdopterin + ATP + H(+) = adenylyl-molybdopterin + diphosphate</text>
        <dbReference type="Rhea" id="RHEA:31331"/>
        <dbReference type="ChEBI" id="CHEBI:15378"/>
        <dbReference type="ChEBI" id="CHEBI:30616"/>
        <dbReference type="ChEBI" id="CHEBI:33019"/>
        <dbReference type="ChEBI" id="CHEBI:58698"/>
        <dbReference type="ChEBI" id="CHEBI:62727"/>
        <dbReference type="EC" id="2.7.7.75"/>
    </reaction>
    <physiologicalReaction direction="left-to-right" evidence="17">
        <dbReference type="Rhea" id="RHEA:31332"/>
    </physiologicalReaction>
</comment>
<comment type="catalytic activity">
    <reaction evidence="17">
        <text>adenylyl-molybdopterin + molybdate = Mo-molybdopterin + AMP + H(+)</text>
        <dbReference type="Rhea" id="RHEA:35047"/>
        <dbReference type="ChEBI" id="CHEBI:15378"/>
        <dbReference type="ChEBI" id="CHEBI:36264"/>
        <dbReference type="ChEBI" id="CHEBI:62727"/>
        <dbReference type="ChEBI" id="CHEBI:71302"/>
        <dbReference type="ChEBI" id="CHEBI:456215"/>
        <dbReference type="EC" id="2.10.1.1"/>
    </reaction>
    <physiologicalReaction direction="left-to-right" evidence="17">
        <dbReference type="Rhea" id="RHEA:35048"/>
    </physiologicalReaction>
</comment>
<comment type="cofactor">
    <cofactor>
        <name>Mg(2+)</name>
        <dbReference type="ChEBI" id="CHEBI:18420"/>
    </cofactor>
</comment>
<comment type="activity regulation">
    <text evidence="1">Inhibited by copper and tungsten.</text>
</comment>
<comment type="pathway">
    <text evidence="17">Cofactor biosynthesis; molybdopterin biosynthesis.</text>
</comment>
<comment type="subunit">
    <text evidence="2 5 6 8 9">Homotrimer, homodimer and homooligomer (PubMed:11325967, PubMed:25137389, PubMed:25531214). Interacts with SRGAP2 (via SH3 domain) (By similarity). Interacts with GLRB (PubMed:15201864, PubMed:16511563, PubMed:25137389, PubMed:25531214). Interacts with GABARAP (PubMed:10900017). Interacts with GABRA3 (PubMed:25531214). GABRA3 and GLRB occupy overlapping binding sites (PubMed:25531214). Interacts with ARHGAP32; IQSEC3, INSYN1 and INSYN2A (By similarity).</text>
</comment>
<comment type="interaction">
    <interactant intactId="EBI-349317">
        <id>Q03555</id>
    </interactant>
    <interactant intactId="EBI-7069198">
        <id>P48168</id>
        <label>Glrb</label>
    </interactant>
    <organismsDiffer>true</organismsDiffer>
    <experiments>4</experiments>
</comment>
<comment type="interaction">
    <interactant intactId="EBI-5273276">
        <id>Q03555-6</id>
    </interactant>
    <interactant intactId="EBI-5273284">
        <id>P20236</id>
        <label>Gabra3</label>
    </interactant>
    <organismsDiffer>false</organismsDiffer>
    <experiments>5</experiments>
</comment>
<comment type="subcellular location">
    <subcellularLocation>
        <location evidence="9">Postsynaptic cell membrane</location>
        <topology evidence="16">Lipid-anchor</topology>
        <orientation evidence="9">Cytoplasmic side</orientation>
    </subcellularLocation>
    <subcellularLocation>
        <location evidence="7">Cell membrane</location>
        <topology evidence="15">Lipid-anchor</topology>
        <orientation evidence="15">Cytoplasmic side</orientation>
    </subcellularLocation>
    <subcellularLocation>
        <location evidence="3">Cytoplasm</location>
        <location evidence="3">Cytosol</location>
    </subcellularLocation>
    <subcellularLocation>
        <location evidence="9">Cytoplasm</location>
        <location evidence="9">Cytoskeleton</location>
    </subcellularLocation>
    <subcellularLocation>
        <location evidence="3">Cell projection</location>
        <location evidence="3">Dendrite</location>
    </subcellularLocation>
    <subcellularLocation>
        <location evidence="2">Postsynaptic density</location>
    </subcellularLocation>
    <text evidence="2 9">Cytoplasmic face of glycinergic postsynaptic membranes (PubMed:16511563). Forms clusters at synapses (By similarity).</text>
</comment>
<comment type="alternative products">
    <event type="alternative splicing"/>
    <isoform>
        <id>Q03555-1</id>
        <name>6</name>
        <sequence type="displayed"/>
    </isoform>
    <isoform>
        <id>Q03555-2</id>
        <name>1</name>
        <name>GE124'56</name>
        <sequence type="described" ref="VSP_003238"/>
    </isoform>
    <isoform>
        <id>Q03555-3</id>
        <name>2</name>
        <name>GE236</name>
        <sequence type="described" ref="VSP_003239 VSP_003240 VSP_003243"/>
    </isoform>
    <isoform>
        <id>Q03555-4</id>
        <name>3</name>
        <name>GE24'6</name>
        <sequence type="described" ref="VSP_003239"/>
    </isoform>
    <isoform>
        <id>Q03555-5</id>
        <name>4</name>
        <name>GE245</name>
        <sequence type="described" ref="VSP_003241 VSP_003242"/>
    </isoform>
    <isoform>
        <id>Q03555-6</id>
        <name>5</name>
        <name>GE26</name>
        <sequence type="described" ref="VSP_003239 VSP_003243"/>
    </isoform>
    <text>Additional isoforms seem to exist.</text>
</comment>
<comment type="tissue specificity">
    <text>Expressed in tissues including spinal cord, brain, liver, kidney and lung.</text>
</comment>
<comment type="PTM">
    <text>Phosphorylated.</text>
</comment>
<comment type="PTM">
    <text evidence="2">Palmitoylated. Palmitoylation is stimulated by GABA type A receptors activity. Palmitoylation by ZDHHC12 regulates clustering at synapses.</text>
</comment>
<comment type="similarity">
    <text evidence="14">In the N-terminal section; belongs to the MoaB/Mog family.</text>
</comment>
<comment type="similarity">
    <text evidence="14">In the C-terminal section; belongs to the MoeA family.</text>
</comment>
<name>GEPH_RAT</name>
<evidence type="ECO:0000250" key="1"/>
<evidence type="ECO:0000250" key="2">
    <source>
        <dbReference type="UniProtKB" id="Q8BUV3"/>
    </source>
</evidence>
<evidence type="ECO:0000250" key="3">
    <source>
        <dbReference type="UniProtKB" id="Q9NQX3"/>
    </source>
</evidence>
<evidence type="ECO:0000256" key="4">
    <source>
        <dbReference type="SAM" id="MobiDB-lite"/>
    </source>
</evidence>
<evidence type="ECO:0000269" key="5">
    <source>
    </source>
</evidence>
<evidence type="ECO:0000269" key="6">
    <source>
    </source>
</evidence>
<evidence type="ECO:0000269" key="7">
    <source>
    </source>
</evidence>
<evidence type="ECO:0000269" key="8">
    <source>
    </source>
</evidence>
<evidence type="ECO:0000269" key="9">
    <source>
    </source>
</evidence>
<evidence type="ECO:0000269" key="10">
    <source>
    </source>
</evidence>
<evidence type="ECO:0000269" key="11">
    <source>
    </source>
</evidence>
<evidence type="ECO:0000303" key="12">
    <source>
    </source>
</evidence>
<evidence type="ECO:0000303" key="13">
    <source>
    </source>
</evidence>
<evidence type="ECO:0000305" key="14"/>
<evidence type="ECO:0000305" key="15">
    <source>
    </source>
</evidence>
<evidence type="ECO:0000305" key="16">
    <source>
    </source>
</evidence>
<evidence type="ECO:0000305" key="17">
    <source>
    </source>
</evidence>
<evidence type="ECO:0007744" key="18">
    <source>
    </source>
</evidence>
<evidence type="ECO:0007829" key="19">
    <source>
        <dbReference type="PDB" id="1IHC"/>
    </source>
</evidence>
<evidence type="ECO:0007829" key="20">
    <source>
        <dbReference type="PDB" id="1T3E"/>
    </source>
</evidence>
<evidence type="ECO:0007829" key="21">
    <source>
        <dbReference type="PDB" id="2FTS"/>
    </source>
</evidence>
<evidence type="ECO:0007829" key="22">
    <source>
        <dbReference type="PDB" id="5ERQ"/>
    </source>
</evidence>
<evidence type="ECO:0007829" key="23">
    <source>
        <dbReference type="PDB" id="6FGC"/>
    </source>
</evidence>
<evidence type="ECO:0007829" key="24">
    <source>
        <dbReference type="PDB" id="6HSN"/>
    </source>
</evidence>
<protein>
    <recommendedName>
        <fullName>Gephyrin</fullName>
    </recommendedName>
    <alternativeName>
        <fullName>Putative glycine receptor-tubulin linker protein</fullName>
    </alternativeName>
    <domain>
        <recommendedName>
            <fullName>Molybdopterin adenylyltransferase</fullName>
            <shortName>MPT adenylyltransferase</shortName>
            <ecNumber evidence="17">2.7.7.75</ecNumber>
        </recommendedName>
        <alternativeName>
            <fullName>Domain G</fullName>
        </alternativeName>
    </domain>
    <domain>
        <recommendedName>
            <fullName>Molybdopterin molybdenumtransferase</fullName>
            <shortName>MPT Mo-transferase</shortName>
            <ecNumber evidence="17">2.10.1.1</ecNumber>
        </recommendedName>
        <alternativeName>
            <fullName>Domain E</fullName>
        </alternativeName>
    </domain>
</protein>
<accession>Q03555</accession>
<reference key="1">
    <citation type="journal article" date="1992" name="Neuron">
        <title>Primary structure and alternative splice variants of gephyrin, a putative glycine receptor-tubulin linker protein.</title>
        <authorList>
            <person name="Prior P."/>
            <person name="Schmitt B."/>
            <person name="Grenningloh G."/>
            <person name="Pribilla I."/>
            <person name="Multhaup G."/>
            <person name="Beyreuther K."/>
            <person name="Maulet Y."/>
            <person name="Werner P."/>
            <person name="Langosch D."/>
            <person name="Kirsch J."/>
            <person name="Betz H."/>
        </authorList>
    </citation>
    <scope>NUCLEOTIDE SEQUENCE [MRNA] (ISOFORM 5)</scope>
    <scope>PARTIAL PROTEIN SEQUENCE</scope>
    <source>
        <strain>Wistar</strain>
        <tissue>Brain</tissue>
    </source>
</reference>
<reference key="2">
    <citation type="submission" date="2006-02" db="EMBL/GenBank/DDBJ databases">
        <authorList>
            <person name="Schmitt B."/>
        </authorList>
    </citation>
    <scope>SEQUENCE REVISION TO 255</scope>
</reference>
<reference key="3">
    <citation type="journal article" date="2000" name="Mol. Cell. Neurosci.">
        <title>Functional heterogeneity of gephyrins.</title>
        <authorList>
            <person name="Meier J."/>
            <person name="De Chaldee M."/>
            <person name="Triller A."/>
            <person name="Vannier C."/>
        </authorList>
    </citation>
    <scope>NUCLEOTIDE SEQUENCE [MRNA] (ISOFORMS 1; 2; 3; 4 AND 5)</scope>
    <scope>INTERACTION WITH GLRB</scope>
</reference>
<reference key="4">
    <citation type="journal article" date="2004" name="EMBO J.">
        <title>Structural basis of dynamic glycine receptor clustering by gephyrin.</title>
        <authorList>
            <person name="Sola M."/>
            <person name="Bavro V.N."/>
            <person name="Timmins J."/>
            <person name="Franz T."/>
            <person name="Ricard-Blum S."/>
            <person name="Schoehn G."/>
            <person name="Ruigrok R.W.H."/>
            <person name="Paarmann I."/>
            <person name="Saiyed T."/>
            <person name="O'Sullivan G.A."/>
            <person name="Schmitt B."/>
            <person name="Betz H."/>
            <person name="Weissenhorn W."/>
        </authorList>
    </citation>
    <scope>PARTIAL PROTEIN SEQUENCE</scope>
    <scope>IDENTIFICATION BY MASS SPECTROMETRY</scope>
    <scope>X-RAY CRYSTALLOGRAPHY (3.25 ANGSTROMS) OF 348-768 IN COMPLEX WITH GLRB</scope>
    <scope>SUBUNIT</scope>
</reference>
<reference key="5">
    <citation type="journal article" date="1993" name="Nature">
        <title>Gephyrin antisense oligonucleotides prevent glycine receptor clustering in spinal neurons.</title>
        <authorList>
            <person name="Kirsch J."/>
            <person name="Wolters I."/>
            <person name="Triller A."/>
            <person name="Betz H."/>
        </authorList>
    </citation>
    <scope>FUNCTION</scope>
</reference>
<reference key="6">
    <citation type="journal article" date="2000" name="Proc. Natl. Acad. Sci. U.S.A.">
        <title>The gamma-aminobutyric acid type A receptor (GABAAR)-associated protein GABARAP interacts with gephyrin but is not involved in receptor anchoring at the synapse.</title>
        <authorList>
            <person name="Kneussel M."/>
            <person name="Haverkamp S."/>
            <person name="Fuhrmann J.C."/>
            <person name="Wang H."/>
            <person name="Waessle H."/>
            <person name="Olsen R.W."/>
            <person name="Betz H."/>
        </authorList>
    </citation>
    <scope>INTERACTION WITH GABARAP</scope>
</reference>
<reference key="7">
    <citation type="journal article" date="1999" name="Proc. Natl. Acad. Sci. U.S.A.">
        <title>The neurotransmitter receptor-anchoring protein gephyrin reconstitutes molybdenum cofactor biosynthesis in bacteria, plants, and mammalian cells.</title>
        <authorList>
            <person name="Stallmeyer B."/>
            <person name="Schwarz G."/>
            <person name="Schulze J."/>
            <person name="Nerlich A."/>
            <person name="Reiss J."/>
            <person name="Kirsch J."/>
            <person name="Mendel R.R."/>
        </authorList>
    </citation>
    <scope>FUNCTION</scope>
    <scope>PATHWAY</scope>
    <scope>CATALYTIC ACTIVITY</scope>
</reference>
<reference key="8">
    <citation type="journal article" date="2003" name="J. Biol. Chem.">
        <title>Isoform heterogeneity of the human gephyrin gene (GPHN), binding domains to the glycine receptor, and mutation analysis in hyperekplexia.</title>
        <authorList>
            <person name="Rees M.I."/>
            <person name="Harvey K."/>
            <person name="Ward H."/>
            <person name="White J.H."/>
            <person name="Evans L."/>
            <person name="Duguid I.C."/>
            <person name="Hsu C.-C."/>
            <person name="Coleman S.L."/>
            <person name="Miller J."/>
            <person name="Baer K."/>
            <person name="Waldvogel H.J."/>
            <person name="Gibbon F."/>
            <person name="Smart T.G."/>
            <person name="Owen M.J."/>
            <person name="Harvey R.J."/>
            <person name="Snell R.G."/>
        </authorList>
    </citation>
    <scope>SUBCELLULAR LOCATION</scope>
</reference>
<reference key="9">
    <citation type="journal article" date="2012" name="Nat. Commun.">
        <title>Quantitative maps of protein phosphorylation sites across 14 different rat organs and tissues.</title>
        <authorList>
            <person name="Lundby A."/>
            <person name="Secher A."/>
            <person name="Lage K."/>
            <person name="Nordsborg N.B."/>
            <person name="Dmytriyev A."/>
            <person name="Lundby C."/>
            <person name="Olsen J.V."/>
        </authorList>
    </citation>
    <scope>PHOSPHORYLATION [LARGE SCALE ANALYSIS] AT SER-201; SER-207 AND SER-283</scope>
    <scope>IDENTIFICATION BY MASS SPECTROMETRY [LARGE SCALE ANALYSIS]</scope>
</reference>
<reference key="10">
    <citation type="journal article" date="2001" name="J. Biol. Chem.">
        <title>X-ray crystal structure of the trimeric N-terminal domain of gephyrin.</title>
        <authorList>
            <person name="Sola M."/>
            <person name="Kneussel M."/>
            <person name="Heck I.S."/>
            <person name="Betz H."/>
            <person name="Weissenhorn W."/>
        </authorList>
    </citation>
    <scope>X-RAY CRYSTALLOGRAPHY (1.9 ANGSTROMS) OF 1-201</scope>
    <scope>SUBUNIT</scope>
</reference>
<reference key="11">
    <citation type="journal article" date="2006" name="EMBO J.">
        <title>Deciphering the structural framework of glycine receptor anchoring by gephyrin.</title>
        <authorList>
            <person name="Kim E.Y."/>
            <person name="Schrader N."/>
            <person name="Smolinsky B."/>
            <person name="Bedet C."/>
            <person name="Vannier C."/>
            <person name="Schwarz G."/>
            <person name="Schindelin H."/>
        </authorList>
    </citation>
    <scope>X-RAY CRYSTALLOGRAPHY (2.4 ANGSTROMS) OF 350-768 IN COMPLEX WITH GLRB</scope>
    <scope>SUBCELLULAR LOCATION</scope>
    <scope>INTERACTION WITH GLRB</scope>
    <scope>MUTAGENESIS OF PHE-362; PRO-745 AND 745-PRO-PRO-746</scope>
</reference>
<reference key="12">
    <citation type="journal article" date="2014" name="ACS Chem. Biol.">
        <title>Modulation of gephyrin-glycine receptor affinity by multivalency.</title>
        <authorList>
            <person name="Maric H.M."/>
            <person name="Kasaragod V.B."/>
            <person name="Schindelin H."/>
        </authorList>
    </citation>
    <scope>X-RAY CRYSTALLOGRAPHY (1.70 ANGSTROMS) OF 350-768</scope>
    <scope>INTERACTION WITH GLRB</scope>
    <scope>SUBUNIT</scope>
</reference>
<reference key="13">
    <citation type="journal article" date="2014" name="Nat. Commun.">
        <title>Molecular basis of the alternative recruitment of GABA(A) versus glycine receptors through gephyrin.</title>
        <authorList>
            <person name="Maric H.M."/>
            <person name="Kasaragod V.B."/>
            <person name="Hausrat T.J."/>
            <person name="Kneussel M."/>
            <person name="Tretter V."/>
            <person name="Stromgaard K."/>
            <person name="Schindelin H."/>
        </authorList>
    </citation>
    <scope>X-RAY CRYSTALLOGRAPHY (2.70 ANGSTROMS) OF 350-768 IN COMPLEX WITH GABRA3</scope>
    <scope>INTERACTION WITH GABRA3 AND GLRB</scope>
    <scope>SUBUNIT</scope>
</reference>
<keyword id="KW-0002">3D-structure</keyword>
<keyword id="KW-0025">Alternative splicing</keyword>
<keyword id="KW-0067">ATP-binding</keyword>
<keyword id="KW-1003">Cell membrane</keyword>
<keyword id="KW-0966">Cell projection</keyword>
<keyword id="KW-0963">Cytoplasm</keyword>
<keyword id="KW-0206">Cytoskeleton</keyword>
<keyword id="KW-0903">Direct protein sequencing</keyword>
<keyword id="KW-0449">Lipoprotein</keyword>
<keyword id="KW-0460">Magnesium</keyword>
<keyword id="KW-0472">Membrane</keyword>
<keyword id="KW-0479">Metal-binding</keyword>
<keyword id="KW-0500">Molybdenum</keyword>
<keyword id="KW-0501">Molybdenum cofactor biosynthesis</keyword>
<keyword id="KW-0511">Multifunctional enzyme</keyword>
<keyword id="KW-0547">Nucleotide-binding</keyword>
<keyword id="KW-0564">Palmitate</keyword>
<keyword id="KW-0597">Phosphoprotein</keyword>
<keyword id="KW-0628">Postsynaptic cell membrane</keyword>
<keyword id="KW-1185">Reference proteome</keyword>
<keyword id="KW-0770">Synapse</keyword>
<keyword id="KW-0808">Transferase</keyword>